<sequence length="578" mass="64863">MIKRYLQFVKPYKYRIFATIIVGIIKFGIPMLIPLLIKYAIDGVINNHALTTDEKVHHLTIAIGIALFIFVIVRPPIEFIRQYLAQWTSNKILYDIRKKLYNHLQALSARFYANNQVGQVISRVINDVEQTKDFILTGLMNIWLDCITIIIALSIMFFLDVKLTLAALFIFPFYILTVYVFFGRLRKLTRERSQALAEVQGFLHERVQGISVVKSFAIEDNEAKNFDKKNTNFLTRALKHTRWNAYSFAAINTVTDIGPIIVIGVGAYLAISGSITVGTLAAFVGYLELLFGPLRRLVASFTTLTQSFASMDRVFQLIDEDYDIKNGVGAQPIEIKQGRIDIDHVSFQYNDNEAPILKDINLSIEKGETVAFVGMSGGGKSTLINLIPRFYDVTSGQILIDGHNIKDFLTGSLRNQIGLVQQDNILFSDTVKENILLGRPTATDEEVVEAAKMANAHDFIMNLPQGYDTEVGERGVKLSGGQKQRLSIARIFLNNPPILILDEATSALDLESESIIQEALDVLSKDRTTLIVAHRLSTITHADKIVVIENGHIVETGTHRELIAKQGAYEHLYSIQNL</sequence>
<comment type="function">
    <text evidence="4">May be involved in multidrug export. Transmembrane domains (TMD) form a pore in the cell membrane and the ATP-binding domain (NBD) is responsible for energy generation.</text>
</comment>
<comment type="activity regulation">
    <text evidence="4">ATPase activity is inhibited by orthovanadate and activated by the cancer drugs doxorubicin and vinblastine.</text>
</comment>
<comment type="subunit">
    <text evidence="4">Homodimer.</text>
</comment>
<comment type="subcellular location">
    <subcellularLocation>
        <location evidence="4">Cell membrane</location>
        <topology evidence="3 4">Multi-pass membrane protein</topology>
    </subcellularLocation>
</comment>
<comment type="domain">
    <text>The ATP-binding domain (NBD) and the transmembrane domain (TMD) are fused.</text>
</comment>
<comment type="similarity">
    <text evidence="5">Belongs to the ABC transporter superfamily.</text>
</comment>
<protein>
    <recommendedName>
        <fullName>Putative multidrug export ATP-binding/permease protein SAV1866</fullName>
        <ecNumber>7.6.2.-</ecNumber>
    </recommendedName>
</protein>
<gene>
    <name type="ordered locus">SAV1866</name>
</gene>
<proteinExistence type="evidence at protein level"/>
<feature type="chain" id="PRO_0000271549" description="Putative multidrug export ATP-binding/permease protein SAV1866">
    <location>
        <begin position="1"/>
        <end position="578"/>
    </location>
</feature>
<feature type="topological domain" description="Cytoplasmic" evidence="1">
    <location>
        <begin position="1"/>
        <end position="15"/>
    </location>
</feature>
<feature type="transmembrane region" description="Helical" evidence="3">
    <location>
        <begin position="16"/>
        <end position="36"/>
    </location>
</feature>
<feature type="topological domain" description="Extracellular" evidence="1">
    <location>
        <begin position="37"/>
        <end position="59"/>
    </location>
</feature>
<feature type="transmembrane region" description="Helical" evidence="3">
    <location>
        <begin position="60"/>
        <end position="80"/>
    </location>
</feature>
<feature type="topological domain" description="Cytoplasmic" evidence="1">
    <location>
        <begin position="81"/>
        <end position="138"/>
    </location>
</feature>
<feature type="transmembrane region" description="Helical" evidence="3">
    <location>
        <begin position="139"/>
        <end position="159"/>
    </location>
</feature>
<feature type="topological domain" description="Extracellular" evidence="1">
    <location>
        <begin position="160"/>
        <end position="162"/>
    </location>
</feature>
<feature type="transmembrane region" description="Helical" evidence="3">
    <location>
        <begin position="163"/>
        <end position="183"/>
    </location>
</feature>
<feature type="topological domain" description="Cytoplasmic" evidence="1">
    <location>
        <begin position="184"/>
        <end position="244"/>
    </location>
</feature>
<feature type="transmembrane region" description="Helical" evidence="3">
    <location>
        <begin position="245"/>
        <end position="263"/>
    </location>
</feature>
<feature type="topological domain" description="Extracellular" evidence="1">
    <location>
        <begin position="264"/>
        <end position="269"/>
    </location>
</feature>
<feature type="transmembrane region" description="Helical" evidence="3">
    <location>
        <begin position="270"/>
        <end position="287"/>
    </location>
</feature>
<feature type="topological domain" description="Cytoplasmic" evidence="1">
    <location>
        <begin position="288"/>
        <end position="578"/>
    </location>
</feature>
<feature type="domain" description="ABC transmembrane type-1" evidence="3">
    <location>
        <begin position="16"/>
        <end position="306"/>
    </location>
</feature>
<feature type="domain" description="ABC transporter" evidence="2">
    <location>
        <begin position="340"/>
        <end position="575"/>
    </location>
</feature>
<feature type="binding site" evidence="2">
    <location>
        <begin position="374"/>
        <end position="381"/>
    </location>
    <ligand>
        <name>ATP</name>
        <dbReference type="ChEBI" id="CHEBI:30616"/>
    </ligand>
</feature>
<feature type="helix" evidence="6">
    <location>
        <begin position="2"/>
        <end position="9"/>
    </location>
</feature>
<feature type="helix" evidence="6">
    <location>
        <begin position="10"/>
        <end position="12"/>
    </location>
</feature>
<feature type="helix" evidence="6">
    <location>
        <begin position="13"/>
        <end position="24"/>
    </location>
</feature>
<feature type="turn" evidence="6">
    <location>
        <begin position="25"/>
        <end position="27"/>
    </location>
</feature>
<feature type="helix" evidence="6">
    <location>
        <begin position="28"/>
        <end position="44"/>
    </location>
</feature>
<feature type="helix" evidence="6">
    <location>
        <begin position="52"/>
        <end position="72"/>
    </location>
</feature>
<feature type="helix" evidence="6">
    <location>
        <begin position="74"/>
        <end position="106"/>
    </location>
</feature>
<feature type="helix" evidence="6">
    <location>
        <begin position="109"/>
        <end position="113"/>
    </location>
</feature>
<feature type="helix" evidence="6">
    <location>
        <begin position="117"/>
        <end position="130"/>
    </location>
</feature>
<feature type="helix" evidence="6">
    <location>
        <begin position="132"/>
        <end position="136"/>
    </location>
</feature>
<feature type="helix" evidence="6">
    <location>
        <begin position="137"/>
        <end position="141"/>
    </location>
</feature>
<feature type="helix" evidence="6">
    <location>
        <begin position="142"/>
        <end position="159"/>
    </location>
</feature>
<feature type="turn" evidence="6">
    <location>
        <begin position="161"/>
        <end position="163"/>
    </location>
</feature>
<feature type="helix" evidence="6">
    <location>
        <begin position="164"/>
        <end position="167"/>
    </location>
</feature>
<feature type="helix" evidence="6">
    <location>
        <begin position="170"/>
        <end position="215"/>
    </location>
</feature>
<feature type="helix" evidence="6">
    <location>
        <begin position="219"/>
        <end position="272"/>
    </location>
</feature>
<feature type="helix" evidence="6">
    <location>
        <begin position="277"/>
        <end position="285"/>
    </location>
</feature>
<feature type="helix" evidence="6">
    <location>
        <begin position="287"/>
        <end position="290"/>
    </location>
</feature>
<feature type="helix" evidence="6">
    <location>
        <begin position="293"/>
        <end position="318"/>
    </location>
</feature>
<feature type="strand" evidence="6">
    <location>
        <begin position="340"/>
        <end position="347"/>
    </location>
</feature>
<feature type="strand" evidence="6">
    <location>
        <begin position="351"/>
        <end position="353"/>
    </location>
</feature>
<feature type="strand" evidence="6">
    <location>
        <begin position="356"/>
        <end position="364"/>
    </location>
</feature>
<feature type="strand" evidence="6">
    <location>
        <begin position="369"/>
        <end position="373"/>
    </location>
</feature>
<feature type="helix" evidence="6">
    <location>
        <begin position="380"/>
        <end position="384"/>
    </location>
</feature>
<feature type="turn" evidence="6">
    <location>
        <begin position="385"/>
        <end position="389"/>
    </location>
</feature>
<feature type="strand" evidence="6">
    <location>
        <begin position="394"/>
        <end position="400"/>
    </location>
</feature>
<feature type="helix" evidence="6">
    <location>
        <begin position="405"/>
        <end position="407"/>
    </location>
</feature>
<feature type="helix" evidence="6">
    <location>
        <begin position="410"/>
        <end position="415"/>
    </location>
</feature>
<feature type="strand" evidence="6">
    <location>
        <begin position="417"/>
        <end position="420"/>
    </location>
</feature>
<feature type="strand" evidence="6">
    <location>
        <begin position="428"/>
        <end position="430"/>
    </location>
</feature>
<feature type="helix" evidence="6">
    <location>
        <begin position="431"/>
        <end position="435"/>
    </location>
</feature>
<feature type="helix" evidence="6">
    <location>
        <begin position="436"/>
        <end position="438"/>
    </location>
</feature>
<feature type="helix" evidence="6">
    <location>
        <begin position="444"/>
        <end position="453"/>
    </location>
</feature>
<feature type="helix" evidence="6">
    <location>
        <begin position="457"/>
        <end position="461"/>
    </location>
</feature>
<feature type="helix" evidence="6">
    <location>
        <begin position="466"/>
        <end position="468"/>
    </location>
</feature>
<feature type="helix" evidence="6">
    <location>
        <begin position="473"/>
        <end position="475"/>
    </location>
</feature>
<feature type="helix" evidence="6">
    <location>
        <begin position="480"/>
        <end position="494"/>
    </location>
</feature>
<feature type="strand" evidence="6">
    <location>
        <begin position="497"/>
        <end position="503"/>
    </location>
</feature>
<feature type="turn" evidence="6">
    <location>
        <begin position="504"/>
        <end position="507"/>
    </location>
</feature>
<feature type="helix" evidence="6">
    <location>
        <begin position="510"/>
        <end position="523"/>
    </location>
</feature>
<feature type="turn" evidence="6">
    <location>
        <begin position="524"/>
        <end position="526"/>
    </location>
</feature>
<feature type="strand" evidence="6">
    <location>
        <begin position="527"/>
        <end position="532"/>
    </location>
</feature>
<feature type="helix" evidence="6">
    <location>
        <begin position="536"/>
        <end position="538"/>
    </location>
</feature>
<feature type="turn" evidence="6">
    <location>
        <begin position="539"/>
        <end position="541"/>
    </location>
</feature>
<feature type="strand" evidence="6">
    <location>
        <begin position="543"/>
        <end position="549"/>
    </location>
</feature>
<feature type="strand" evidence="6">
    <location>
        <begin position="552"/>
        <end position="557"/>
    </location>
</feature>
<feature type="helix" evidence="6">
    <location>
        <begin position="559"/>
        <end position="564"/>
    </location>
</feature>
<feature type="helix" evidence="6">
    <location>
        <begin position="568"/>
        <end position="573"/>
    </location>
</feature>
<feature type="turn" evidence="6">
    <location>
        <begin position="574"/>
        <end position="577"/>
    </location>
</feature>
<dbReference type="EC" id="7.6.2.-"/>
<dbReference type="EMBL" id="BA000017">
    <property type="protein sequence ID" value="BAB58028.1"/>
    <property type="molecule type" value="Genomic_DNA"/>
</dbReference>
<dbReference type="RefSeq" id="WP_000597238.1">
    <property type="nucleotide sequence ID" value="NC_002758.2"/>
</dbReference>
<dbReference type="PDB" id="2HYD">
    <property type="method" value="X-ray"/>
    <property type="resolution" value="3.00 A"/>
    <property type="chains" value="A/B=1-578"/>
</dbReference>
<dbReference type="PDB" id="2ONJ">
    <property type="method" value="X-ray"/>
    <property type="resolution" value="3.40 A"/>
    <property type="chains" value="A/B=1-578"/>
</dbReference>
<dbReference type="PDB" id="4A82">
    <property type="method" value="EM"/>
    <property type="resolution" value="2.00 A"/>
    <property type="chains" value="A/B/C/D=1-578"/>
</dbReference>
<dbReference type="PDBsum" id="2HYD"/>
<dbReference type="PDBsum" id="2ONJ"/>
<dbReference type="PDBsum" id="4A82"/>
<dbReference type="SMR" id="Q99T13"/>
<dbReference type="DIP" id="DIP-60414N"/>
<dbReference type="KEGG" id="sav:SAV1866"/>
<dbReference type="HOGENOM" id="CLU_000604_84_3_9"/>
<dbReference type="PhylomeDB" id="Q99T13"/>
<dbReference type="BRENDA" id="7.6.2.2">
    <property type="organism ID" value="3352"/>
</dbReference>
<dbReference type="EvolutionaryTrace" id="Q99T13"/>
<dbReference type="Proteomes" id="UP000002481">
    <property type="component" value="Chromosome"/>
</dbReference>
<dbReference type="GO" id="GO:0005886">
    <property type="term" value="C:plasma membrane"/>
    <property type="evidence" value="ECO:0007669"/>
    <property type="project" value="UniProtKB-SubCell"/>
</dbReference>
<dbReference type="GO" id="GO:0015421">
    <property type="term" value="F:ABC-type oligopeptide transporter activity"/>
    <property type="evidence" value="ECO:0007669"/>
    <property type="project" value="TreeGrafter"/>
</dbReference>
<dbReference type="GO" id="GO:0005524">
    <property type="term" value="F:ATP binding"/>
    <property type="evidence" value="ECO:0007669"/>
    <property type="project" value="UniProtKB-KW"/>
</dbReference>
<dbReference type="GO" id="GO:0016887">
    <property type="term" value="F:ATP hydrolysis activity"/>
    <property type="evidence" value="ECO:0007669"/>
    <property type="project" value="InterPro"/>
</dbReference>
<dbReference type="CDD" id="cd18554">
    <property type="entry name" value="ABC_6TM_Sav1866_like"/>
    <property type="match status" value="1"/>
</dbReference>
<dbReference type="CDD" id="cd03251">
    <property type="entry name" value="ABCC_MsbA"/>
    <property type="match status" value="1"/>
</dbReference>
<dbReference type="FunFam" id="1.20.1560.10:FF:000069">
    <property type="entry name" value="Multidrug ABC transporter ATP-binding protein"/>
    <property type="match status" value="1"/>
</dbReference>
<dbReference type="FunFam" id="3.40.50.300:FF:000218">
    <property type="entry name" value="Multidrug ABC transporter ATP-binding protein"/>
    <property type="match status" value="1"/>
</dbReference>
<dbReference type="Gene3D" id="1.20.1560.10">
    <property type="entry name" value="ABC transporter type 1, transmembrane domain"/>
    <property type="match status" value="1"/>
</dbReference>
<dbReference type="Gene3D" id="3.40.50.300">
    <property type="entry name" value="P-loop containing nucleotide triphosphate hydrolases"/>
    <property type="match status" value="1"/>
</dbReference>
<dbReference type="InterPro" id="IPR003593">
    <property type="entry name" value="AAA+_ATPase"/>
</dbReference>
<dbReference type="InterPro" id="IPR011527">
    <property type="entry name" value="ABC1_TM_dom"/>
</dbReference>
<dbReference type="InterPro" id="IPR036640">
    <property type="entry name" value="ABC1_TM_sf"/>
</dbReference>
<dbReference type="InterPro" id="IPR003439">
    <property type="entry name" value="ABC_transporter-like_ATP-bd"/>
</dbReference>
<dbReference type="InterPro" id="IPR017871">
    <property type="entry name" value="ABC_transporter-like_CS"/>
</dbReference>
<dbReference type="InterPro" id="IPR027417">
    <property type="entry name" value="P-loop_NTPase"/>
</dbReference>
<dbReference type="InterPro" id="IPR039421">
    <property type="entry name" value="Type_1_exporter"/>
</dbReference>
<dbReference type="PANTHER" id="PTHR43394:SF1">
    <property type="entry name" value="ATP-BINDING CASSETTE SUB-FAMILY B MEMBER 10, MITOCHONDRIAL"/>
    <property type="match status" value="1"/>
</dbReference>
<dbReference type="PANTHER" id="PTHR43394">
    <property type="entry name" value="ATP-DEPENDENT PERMEASE MDL1, MITOCHONDRIAL"/>
    <property type="match status" value="1"/>
</dbReference>
<dbReference type="Pfam" id="PF00664">
    <property type="entry name" value="ABC_membrane"/>
    <property type="match status" value="1"/>
</dbReference>
<dbReference type="Pfam" id="PF00005">
    <property type="entry name" value="ABC_tran"/>
    <property type="match status" value="1"/>
</dbReference>
<dbReference type="SMART" id="SM00382">
    <property type="entry name" value="AAA"/>
    <property type="match status" value="1"/>
</dbReference>
<dbReference type="SUPFAM" id="SSF90123">
    <property type="entry name" value="ABC transporter transmembrane region"/>
    <property type="match status" value="1"/>
</dbReference>
<dbReference type="SUPFAM" id="SSF52540">
    <property type="entry name" value="P-loop containing nucleoside triphosphate hydrolases"/>
    <property type="match status" value="1"/>
</dbReference>
<dbReference type="PROSITE" id="PS50929">
    <property type="entry name" value="ABC_TM1F"/>
    <property type="match status" value="1"/>
</dbReference>
<dbReference type="PROSITE" id="PS00211">
    <property type="entry name" value="ABC_TRANSPORTER_1"/>
    <property type="match status" value="1"/>
</dbReference>
<dbReference type="PROSITE" id="PS50893">
    <property type="entry name" value="ABC_TRANSPORTER_2"/>
    <property type="match status" value="1"/>
</dbReference>
<organism>
    <name type="scientific">Staphylococcus aureus (strain Mu50 / ATCC 700699)</name>
    <dbReference type="NCBI Taxonomy" id="158878"/>
    <lineage>
        <taxon>Bacteria</taxon>
        <taxon>Bacillati</taxon>
        <taxon>Bacillota</taxon>
        <taxon>Bacilli</taxon>
        <taxon>Bacillales</taxon>
        <taxon>Staphylococcaceae</taxon>
        <taxon>Staphylococcus</taxon>
    </lineage>
</organism>
<reference key="1">
    <citation type="journal article" date="2001" name="Lancet">
        <title>Whole genome sequencing of meticillin-resistant Staphylococcus aureus.</title>
        <authorList>
            <person name="Kuroda M."/>
            <person name="Ohta T."/>
            <person name="Uchiyama I."/>
            <person name="Baba T."/>
            <person name="Yuzawa H."/>
            <person name="Kobayashi I."/>
            <person name="Cui L."/>
            <person name="Oguchi A."/>
            <person name="Aoki K."/>
            <person name="Nagai Y."/>
            <person name="Lian J.-Q."/>
            <person name="Ito T."/>
            <person name="Kanamori M."/>
            <person name="Matsumaru H."/>
            <person name="Maruyama A."/>
            <person name="Murakami H."/>
            <person name="Hosoyama A."/>
            <person name="Mizutani-Ui Y."/>
            <person name="Takahashi N.K."/>
            <person name="Sawano T."/>
            <person name="Inoue R."/>
            <person name="Kaito C."/>
            <person name="Sekimizu K."/>
            <person name="Hirakawa H."/>
            <person name="Kuhara S."/>
            <person name="Goto S."/>
            <person name="Yabuzaki J."/>
            <person name="Kanehisa M."/>
            <person name="Yamashita A."/>
            <person name="Oshima K."/>
            <person name="Furuya K."/>
            <person name="Yoshino C."/>
            <person name="Shiba T."/>
            <person name="Hattori M."/>
            <person name="Ogasawara N."/>
            <person name="Hayashi H."/>
            <person name="Hiramatsu K."/>
        </authorList>
    </citation>
    <scope>NUCLEOTIDE SEQUENCE [LARGE SCALE GENOMIC DNA]</scope>
    <source>
        <strain>Mu50 / ATCC 700699</strain>
    </source>
</reference>
<reference key="2">
    <citation type="journal article" date="2006" name="Nature">
        <title>Structure of a bacterial multidrug ABC transporter.</title>
        <authorList>
            <person name="Dawson R.J.P."/>
            <person name="Locher K.P."/>
        </authorList>
    </citation>
    <scope>X-RAY CRYSTALLOGRAPHY (3.0 ANGSTROMS) IN COMPLEX WITH ADP</scope>
    <scope>FUNCTION</scope>
    <scope>ACTIVITY REGULATION</scope>
    <scope>SUBUNIT</scope>
    <scope>SUBCELLULAR LOCATION</scope>
    <scope>TOPOLOGY</scope>
</reference>
<name>Y1866_STAAM</name>
<accession>Q99T13</accession>
<keyword id="KW-0002">3D-structure</keyword>
<keyword id="KW-0067">ATP-binding</keyword>
<keyword id="KW-1003">Cell membrane</keyword>
<keyword id="KW-0472">Membrane</keyword>
<keyword id="KW-0547">Nucleotide-binding</keyword>
<keyword id="KW-1278">Translocase</keyword>
<keyword id="KW-0812">Transmembrane</keyword>
<keyword id="KW-1133">Transmembrane helix</keyword>
<keyword id="KW-0813">Transport</keyword>
<evidence type="ECO:0000255" key="1"/>
<evidence type="ECO:0000255" key="2">
    <source>
        <dbReference type="PROSITE-ProRule" id="PRU00434"/>
    </source>
</evidence>
<evidence type="ECO:0000255" key="3">
    <source>
        <dbReference type="PROSITE-ProRule" id="PRU00441"/>
    </source>
</evidence>
<evidence type="ECO:0000269" key="4">
    <source>
    </source>
</evidence>
<evidence type="ECO:0000305" key="5"/>
<evidence type="ECO:0007829" key="6">
    <source>
        <dbReference type="PDB" id="2HYD"/>
    </source>
</evidence>